<accession>A8H0H1</accession>
<comment type="catalytic activity">
    <reaction evidence="1">
        <text>beta-D-fructose 1,6-bisphosphate + H2O = beta-D-fructose 6-phosphate + phosphate</text>
        <dbReference type="Rhea" id="RHEA:11064"/>
        <dbReference type="ChEBI" id="CHEBI:15377"/>
        <dbReference type="ChEBI" id="CHEBI:32966"/>
        <dbReference type="ChEBI" id="CHEBI:43474"/>
        <dbReference type="ChEBI" id="CHEBI:57634"/>
        <dbReference type="EC" id="3.1.3.11"/>
    </reaction>
</comment>
<comment type="cofactor">
    <cofactor evidence="1">
        <name>Mg(2+)</name>
        <dbReference type="ChEBI" id="CHEBI:18420"/>
    </cofactor>
    <text evidence="1">Binds 2 magnesium ions per subunit.</text>
</comment>
<comment type="pathway">
    <text evidence="1">Carbohydrate biosynthesis; gluconeogenesis.</text>
</comment>
<comment type="subunit">
    <text evidence="1">Homotetramer.</text>
</comment>
<comment type="subcellular location">
    <subcellularLocation>
        <location evidence="1">Cytoplasm</location>
    </subcellularLocation>
</comment>
<comment type="similarity">
    <text evidence="1">Belongs to the FBPase class 1 family.</text>
</comment>
<evidence type="ECO:0000255" key="1">
    <source>
        <dbReference type="HAMAP-Rule" id="MF_01855"/>
    </source>
</evidence>
<reference key="1">
    <citation type="submission" date="2007-10" db="EMBL/GenBank/DDBJ databases">
        <title>Complete sequence of Shewanella pealeana ATCC 700345.</title>
        <authorList>
            <consortium name="US DOE Joint Genome Institute"/>
            <person name="Copeland A."/>
            <person name="Lucas S."/>
            <person name="Lapidus A."/>
            <person name="Barry K."/>
            <person name="Glavina del Rio T."/>
            <person name="Dalin E."/>
            <person name="Tice H."/>
            <person name="Pitluck S."/>
            <person name="Chertkov O."/>
            <person name="Brettin T."/>
            <person name="Bruce D."/>
            <person name="Detter J.C."/>
            <person name="Han C."/>
            <person name="Schmutz J."/>
            <person name="Larimer F."/>
            <person name="Land M."/>
            <person name="Hauser L."/>
            <person name="Kyrpides N."/>
            <person name="Kim E."/>
            <person name="Zhao J.-S.Z."/>
            <person name="Manno D."/>
            <person name="Hawari J."/>
            <person name="Richardson P."/>
        </authorList>
    </citation>
    <scope>NUCLEOTIDE SEQUENCE [LARGE SCALE GENOMIC DNA]</scope>
    <source>
        <strain>ATCC 700345 / ANG-SQ1</strain>
    </source>
</reference>
<proteinExistence type="inferred from homology"/>
<name>F16PA_SHEPA</name>
<feature type="chain" id="PRO_0000364708" description="Fructose-1,6-bisphosphatase class 1">
    <location>
        <begin position="1"/>
        <end position="329"/>
    </location>
</feature>
<feature type="binding site" evidence="1">
    <location>
        <position position="84"/>
    </location>
    <ligand>
        <name>Mg(2+)</name>
        <dbReference type="ChEBI" id="CHEBI:18420"/>
        <label>1</label>
    </ligand>
</feature>
<feature type="binding site" evidence="1">
    <location>
        <position position="103"/>
    </location>
    <ligand>
        <name>Mg(2+)</name>
        <dbReference type="ChEBI" id="CHEBI:18420"/>
        <label>1</label>
    </ligand>
</feature>
<feature type="binding site" evidence="1">
    <location>
        <position position="103"/>
    </location>
    <ligand>
        <name>Mg(2+)</name>
        <dbReference type="ChEBI" id="CHEBI:18420"/>
        <label>2</label>
    </ligand>
</feature>
<feature type="binding site" evidence="1">
    <location>
        <position position="105"/>
    </location>
    <ligand>
        <name>Mg(2+)</name>
        <dbReference type="ChEBI" id="CHEBI:18420"/>
        <label>1</label>
    </ligand>
</feature>
<feature type="binding site" evidence="1">
    <location>
        <begin position="106"/>
        <end position="109"/>
    </location>
    <ligand>
        <name>substrate</name>
    </ligand>
</feature>
<feature type="binding site" evidence="1">
    <location>
        <position position="106"/>
    </location>
    <ligand>
        <name>Mg(2+)</name>
        <dbReference type="ChEBI" id="CHEBI:18420"/>
        <label>2</label>
    </ligand>
</feature>
<feature type="binding site" evidence="1">
    <location>
        <position position="196"/>
    </location>
    <ligand>
        <name>substrate</name>
    </ligand>
</feature>
<feature type="binding site" evidence="1">
    <location>
        <position position="262"/>
    </location>
    <ligand>
        <name>substrate</name>
    </ligand>
</feature>
<feature type="binding site" evidence="1">
    <location>
        <position position="268"/>
    </location>
    <ligand>
        <name>Mg(2+)</name>
        <dbReference type="ChEBI" id="CHEBI:18420"/>
        <label>2</label>
    </ligand>
</feature>
<keyword id="KW-0119">Carbohydrate metabolism</keyword>
<keyword id="KW-0963">Cytoplasm</keyword>
<keyword id="KW-0378">Hydrolase</keyword>
<keyword id="KW-0460">Magnesium</keyword>
<keyword id="KW-0479">Metal-binding</keyword>
<keyword id="KW-1185">Reference proteome</keyword>
<protein>
    <recommendedName>
        <fullName evidence="1">Fructose-1,6-bisphosphatase class 1</fullName>
        <shortName evidence="1">FBPase class 1</shortName>
        <ecNumber evidence="1">3.1.3.11</ecNumber>
    </recommendedName>
    <alternativeName>
        <fullName evidence="1">D-fructose-1,6-bisphosphate 1-phosphohydrolase class 1</fullName>
    </alternativeName>
</protein>
<sequence length="329" mass="35802">MQTLAENLTSQAISPTLEKLILTLANTSKEISHAVRHGALAGVLGATEQENVQGETQKKLDIITNDMLKDALKADGTVRGIASEEEDYVVEADANGEFLVCFDPLDGSSNIDINSLVGTIFSVLPAPAGELTEKSFLQAGRNQVAAGYVLYGPSTMLALTTGQGVQLFTLNPETNEFLLTNGAMAISKDTGEFAINMSNQRFWEAPMQTYISDLLLGKIGPREKSFNMRWIAAMVGDVHRVLCRGGIFTYPTDNKNPEKPYKLRLMYEANPMAFLVEQAGGKASTGYETIMDIQPTEIHQRVAVILGSANEVDACLEYHGIDYSEEPVL</sequence>
<organism>
    <name type="scientific">Shewanella pealeana (strain ATCC 700345 / ANG-SQ1)</name>
    <dbReference type="NCBI Taxonomy" id="398579"/>
    <lineage>
        <taxon>Bacteria</taxon>
        <taxon>Pseudomonadati</taxon>
        <taxon>Pseudomonadota</taxon>
        <taxon>Gammaproteobacteria</taxon>
        <taxon>Alteromonadales</taxon>
        <taxon>Shewanellaceae</taxon>
        <taxon>Shewanella</taxon>
    </lineage>
</organism>
<gene>
    <name evidence="1" type="primary">fbp</name>
    <name type="ordered locus">Spea_0731</name>
</gene>
<dbReference type="EC" id="3.1.3.11" evidence="1"/>
<dbReference type="EMBL" id="CP000851">
    <property type="protein sequence ID" value="ABV86058.1"/>
    <property type="molecule type" value="Genomic_DNA"/>
</dbReference>
<dbReference type="RefSeq" id="WP_012153994.1">
    <property type="nucleotide sequence ID" value="NC_009901.1"/>
</dbReference>
<dbReference type="SMR" id="A8H0H1"/>
<dbReference type="STRING" id="398579.Spea_0731"/>
<dbReference type="KEGG" id="spl:Spea_0731"/>
<dbReference type="eggNOG" id="COG0158">
    <property type="taxonomic scope" value="Bacteria"/>
</dbReference>
<dbReference type="HOGENOM" id="CLU_039977_0_0_6"/>
<dbReference type="OrthoDB" id="9806756at2"/>
<dbReference type="UniPathway" id="UPA00138"/>
<dbReference type="Proteomes" id="UP000002608">
    <property type="component" value="Chromosome"/>
</dbReference>
<dbReference type="GO" id="GO:0005829">
    <property type="term" value="C:cytosol"/>
    <property type="evidence" value="ECO:0007669"/>
    <property type="project" value="TreeGrafter"/>
</dbReference>
<dbReference type="GO" id="GO:0042132">
    <property type="term" value="F:fructose 1,6-bisphosphate 1-phosphatase activity"/>
    <property type="evidence" value="ECO:0007669"/>
    <property type="project" value="UniProtKB-UniRule"/>
</dbReference>
<dbReference type="GO" id="GO:0000287">
    <property type="term" value="F:magnesium ion binding"/>
    <property type="evidence" value="ECO:0007669"/>
    <property type="project" value="UniProtKB-UniRule"/>
</dbReference>
<dbReference type="GO" id="GO:0030388">
    <property type="term" value="P:fructose 1,6-bisphosphate metabolic process"/>
    <property type="evidence" value="ECO:0007669"/>
    <property type="project" value="TreeGrafter"/>
</dbReference>
<dbReference type="GO" id="GO:0006002">
    <property type="term" value="P:fructose 6-phosphate metabolic process"/>
    <property type="evidence" value="ECO:0007669"/>
    <property type="project" value="TreeGrafter"/>
</dbReference>
<dbReference type="GO" id="GO:0006000">
    <property type="term" value="P:fructose metabolic process"/>
    <property type="evidence" value="ECO:0007669"/>
    <property type="project" value="TreeGrafter"/>
</dbReference>
<dbReference type="GO" id="GO:0006094">
    <property type="term" value="P:gluconeogenesis"/>
    <property type="evidence" value="ECO:0007669"/>
    <property type="project" value="UniProtKB-UniRule"/>
</dbReference>
<dbReference type="GO" id="GO:0005986">
    <property type="term" value="P:sucrose biosynthetic process"/>
    <property type="evidence" value="ECO:0007669"/>
    <property type="project" value="TreeGrafter"/>
</dbReference>
<dbReference type="CDD" id="cd00354">
    <property type="entry name" value="FBPase"/>
    <property type="match status" value="1"/>
</dbReference>
<dbReference type="FunFam" id="3.40.190.80:FF:000011">
    <property type="entry name" value="Fructose-1,6-bisphosphatase class 1"/>
    <property type="match status" value="1"/>
</dbReference>
<dbReference type="Gene3D" id="3.40.190.80">
    <property type="match status" value="1"/>
</dbReference>
<dbReference type="Gene3D" id="3.30.540.10">
    <property type="entry name" value="Fructose-1,6-Bisphosphatase, subunit A, domain 1"/>
    <property type="match status" value="1"/>
</dbReference>
<dbReference type="HAMAP" id="MF_01855">
    <property type="entry name" value="FBPase_class1"/>
    <property type="match status" value="1"/>
</dbReference>
<dbReference type="InterPro" id="IPR044015">
    <property type="entry name" value="FBPase_C_dom"/>
</dbReference>
<dbReference type="InterPro" id="IPR000146">
    <property type="entry name" value="FBPase_class-1"/>
</dbReference>
<dbReference type="InterPro" id="IPR033391">
    <property type="entry name" value="FBPase_N"/>
</dbReference>
<dbReference type="InterPro" id="IPR028343">
    <property type="entry name" value="FBPtase"/>
</dbReference>
<dbReference type="NCBIfam" id="NF006779">
    <property type="entry name" value="PRK09293.1-3"/>
    <property type="match status" value="1"/>
</dbReference>
<dbReference type="NCBIfam" id="NF006780">
    <property type="entry name" value="PRK09293.1-4"/>
    <property type="match status" value="1"/>
</dbReference>
<dbReference type="PANTHER" id="PTHR11556">
    <property type="entry name" value="FRUCTOSE-1,6-BISPHOSPHATASE-RELATED"/>
    <property type="match status" value="1"/>
</dbReference>
<dbReference type="PANTHER" id="PTHR11556:SF35">
    <property type="entry name" value="SEDOHEPTULOSE-1,7-BISPHOSPHATASE, CHLOROPLASTIC"/>
    <property type="match status" value="1"/>
</dbReference>
<dbReference type="Pfam" id="PF00316">
    <property type="entry name" value="FBPase"/>
    <property type="match status" value="1"/>
</dbReference>
<dbReference type="Pfam" id="PF18913">
    <property type="entry name" value="FBPase_C"/>
    <property type="match status" value="1"/>
</dbReference>
<dbReference type="PIRSF" id="PIRSF500210">
    <property type="entry name" value="FBPtase"/>
    <property type="match status" value="1"/>
</dbReference>
<dbReference type="PIRSF" id="PIRSF000904">
    <property type="entry name" value="FBPtase_SBPase"/>
    <property type="match status" value="1"/>
</dbReference>
<dbReference type="PRINTS" id="PR00115">
    <property type="entry name" value="F16BPHPHTASE"/>
</dbReference>
<dbReference type="SUPFAM" id="SSF56655">
    <property type="entry name" value="Carbohydrate phosphatase"/>
    <property type="match status" value="1"/>
</dbReference>